<proteinExistence type="evidence at transcript level"/>
<feature type="transit peptide" description="Chloroplast" evidence="2">
    <location>
        <begin position="1"/>
        <end position="26"/>
    </location>
</feature>
<feature type="chain" id="PRO_0000401426" description="Stearoyl-[acyl-carrier-protein] 9-desaturase 1, chloroplastic">
    <location>
        <begin position="27"/>
        <end position="381"/>
    </location>
</feature>
<feature type="binding site" evidence="1">
    <location>
        <position position="120"/>
    </location>
    <ligand>
        <name>Fe cation</name>
        <dbReference type="ChEBI" id="CHEBI:24875"/>
        <label>1</label>
    </ligand>
</feature>
<feature type="binding site" evidence="1">
    <location>
        <position position="158"/>
    </location>
    <ligand>
        <name>Fe cation</name>
        <dbReference type="ChEBI" id="CHEBI:24875"/>
        <label>1</label>
    </ligand>
</feature>
<feature type="binding site" evidence="1">
    <location>
        <position position="158"/>
    </location>
    <ligand>
        <name>Fe cation</name>
        <dbReference type="ChEBI" id="CHEBI:24875"/>
        <label>2</label>
    </ligand>
</feature>
<feature type="binding site" evidence="1">
    <location>
        <position position="161"/>
    </location>
    <ligand>
        <name>Fe cation</name>
        <dbReference type="ChEBI" id="CHEBI:24875"/>
        <label>1</label>
    </ligand>
</feature>
<feature type="binding site" evidence="1">
    <location>
        <position position="211"/>
    </location>
    <ligand>
        <name>Fe cation</name>
        <dbReference type="ChEBI" id="CHEBI:24875"/>
        <label>2</label>
    </ligand>
</feature>
<feature type="binding site" evidence="1">
    <location>
        <position position="244"/>
    </location>
    <ligand>
        <name>Fe cation</name>
        <dbReference type="ChEBI" id="CHEBI:24875"/>
        <label>1</label>
    </ligand>
</feature>
<feature type="binding site" evidence="1">
    <location>
        <position position="244"/>
    </location>
    <ligand>
        <name>Fe cation</name>
        <dbReference type="ChEBI" id="CHEBI:24875"/>
        <label>2</label>
    </ligand>
</feature>
<feature type="binding site" evidence="1">
    <location>
        <position position="247"/>
    </location>
    <ligand>
        <name>Fe cation</name>
        <dbReference type="ChEBI" id="CHEBI:24875"/>
        <label>2</label>
    </ligand>
</feature>
<sequence>MQVVGTVRVSGCGAVVAPSRRQCRVSAAVLTAAETATATRRRVTHSMPPEKAEVFRSLEGWARSSLLPLLKPVEECWQPTDFLPDSSSEMFEHQVHELRARAAGLPDEYFVVLVGDMITEEALPTYQTMINTLDGVRDETGASACPWAVWTRTWTAEENRHGDILGKYMYLSGRVDMRMVEKTVQYLIGSGMDPGTENNPYLGFVYTSFQERATAVSHGNTARLARAHGDDVLARTCGTIAADEKRHETAYGRIVEQLLRLDPDGAMLAIADMMHKRITMPAHLMHDGRDMNLFDHFAAVAQRLNVYTARDYADIVEFLVKRWKLETLETGLSGEGRRARDFVCGLAKRMRRAAERAEDRAKKDEQRKVKFSWIYDREVIV</sequence>
<name>STAD1_ORYSJ</name>
<comment type="function">
    <text evidence="1">Converts stearoyl-ACP to oleoyl-ACP by introduction of a cis double bond between carbons 9 and 10 of the acyl chain.</text>
</comment>
<comment type="catalytic activity">
    <reaction evidence="1">
        <text>octadecanoyl-[ACP] + 2 reduced [2Fe-2S]-[ferredoxin] + O2 + 2 H(+) = (9Z)-octadecenoyl-[ACP] + 2 oxidized [2Fe-2S]-[ferredoxin] + 2 H2O</text>
        <dbReference type="Rhea" id="RHEA:11776"/>
        <dbReference type="Rhea" id="RHEA-COMP:9656"/>
        <dbReference type="Rhea" id="RHEA-COMP:9924"/>
        <dbReference type="Rhea" id="RHEA-COMP:10000"/>
        <dbReference type="Rhea" id="RHEA-COMP:10001"/>
        <dbReference type="ChEBI" id="CHEBI:15377"/>
        <dbReference type="ChEBI" id="CHEBI:15378"/>
        <dbReference type="ChEBI" id="CHEBI:15379"/>
        <dbReference type="ChEBI" id="CHEBI:33737"/>
        <dbReference type="ChEBI" id="CHEBI:33738"/>
        <dbReference type="ChEBI" id="CHEBI:78495"/>
        <dbReference type="ChEBI" id="CHEBI:78783"/>
        <dbReference type="EC" id="1.14.19.2"/>
    </reaction>
</comment>
<comment type="cofactor">
    <cofactor evidence="1">
        <name>Fe(2+)</name>
        <dbReference type="ChEBI" id="CHEBI:29033"/>
    </cofactor>
    <text evidence="1">Binds 2 Fe(2+) ions per subunit.</text>
</comment>
<comment type="pathway">
    <text>Lipid metabolism; fatty acid metabolism.</text>
</comment>
<comment type="subunit">
    <text evidence="1">Homodimer.</text>
</comment>
<comment type="subcellular location">
    <subcellularLocation>
        <location evidence="3">Plastid</location>
        <location evidence="3">Chloroplast</location>
    </subcellularLocation>
</comment>
<comment type="similarity">
    <text evidence="3">Belongs to the fatty acid desaturase type 2 family.</text>
</comment>
<keyword id="KW-0150">Chloroplast</keyword>
<keyword id="KW-0275">Fatty acid biosynthesis</keyword>
<keyword id="KW-0276">Fatty acid metabolism</keyword>
<keyword id="KW-0408">Iron</keyword>
<keyword id="KW-0444">Lipid biosynthesis</keyword>
<keyword id="KW-0443">Lipid metabolism</keyword>
<keyword id="KW-0479">Metal-binding</keyword>
<keyword id="KW-0560">Oxidoreductase</keyword>
<keyword id="KW-0934">Plastid</keyword>
<keyword id="KW-1185">Reference proteome</keyword>
<keyword id="KW-0809">Transit peptide</keyword>
<organism>
    <name type="scientific">Oryza sativa subsp. japonica</name>
    <name type="common">Rice</name>
    <dbReference type="NCBI Taxonomy" id="39947"/>
    <lineage>
        <taxon>Eukaryota</taxon>
        <taxon>Viridiplantae</taxon>
        <taxon>Streptophyta</taxon>
        <taxon>Embryophyta</taxon>
        <taxon>Tracheophyta</taxon>
        <taxon>Spermatophyta</taxon>
        <taxon>Magnoliopsida</taxon>
        <taxon>Liliopsida</taxon>
        <taxon>Poales</taxon>
        <taxon>Poaceae</taxon>
        <taxon>BOP clade</taxon>
        <taxon>Oryzoideae</taxon>
        <taxon>Oryzeae</taxon>
        <taxon>Oryzinae</taxon>
        <taxon>Oryza</taxon>
        <taxon>Oryza sativa</taxon>
    </lineage>
</organism>
<protein>
    <recommendedName>
        <fullName>Stearoyl-[acyl-carrier-protein] 9-desaturase 1, chloroplastic</fullName>
        <shortName>Stearoyl-ACP desaturase 1</shortName>
        <ecNumber evidence="1">1.14.19.2</ecNumber>
    </recommendedName>
    <alternativeName>
        <fullName>Acyl-[acyl-carrier-protein] desaturase 1</fullName>
    </alternativeName>
</protein>
<dbReference type="EC" id="1.14.19.2" evidence="1"/>
<dbReference type="EMBL" id="AP003227">
    <property type="protein sequence ID" value="BAC06230.1"/>
    <property type="molecule type" value="Genomic_DNA"/>
</dbReference>
<dbReference type="EMBL" id="AP008207">
    <property type="protein sequence ID" value="BAF06908.1"/>
    <property type="molecule type" value="Genomic_DNA"/>
</dbReference>
<dbReference type="EMBL" id="AP014957">
    <property type="protein sequence ID" value="BAS75557.1"/>
    <property type="molecule type" value="Genomic_DNA"/>
</dbReference>
<dbReference type="EMBL" id="AK059526">
    <property type="protein sequence ID" value="BAG87021.1"/>
    <property type="molecule type" value="mRNA"/>
</dbReference>
<dbReference type="EMBL" id="AK101524">
    <property type="protein sequence ID" value="BAG95102.1"/>
    <property type="molecule type" value="mRNA"/>
</dbReference>
<dbReference type="EMBL" id="AK120809">
    <property type="protein sequence ID" value="BAH00184.1"/>
    <property type="molecule type" value="mRNA"/>
</dbReference>
<dbReference type="RefSeq" id="XP_015630103.1">
    <property type="nucleotide sequence ID" value="XM_015774617.1"/>
</dbReference>
<dbReference type="SMR" id="Q8LJJ9"/>
<dbReference type="FunCoup" id="Q8LJJ9">
    <property type="interactions" value="150"/>
</dbReference>
<dbReference type="STRING" id="39947.Q8LJJ9"/>
<dbReference type="PaxDb" id="39947-Q8LJJ9"/>
<dbReference type="EnsemblPlants" id="Os01t0880800-01">
    <property type="protein sequence ID" value="Os01t0880800-01"/>
    <property type="gene ID" value="Os01g0880800"/>
</dbReference>
<dbReference type="Gramene" id="Os01t0880800-01">
    <property type="protein sequence ID" value="Os01t0880800-01"/>
    <property type="gene ID" value="Os01g0880800"/>
</dbReference>
<dbReference type="KEGG" id="dosa:Os01g0880800"/>
<dbReference type="eggNOG" id="ENOG502QTEI">
    <property type="taxonomic scope" value="Eukaryota"/>
</dbReference>
<dbReference type="HOGENOM" id="CLU_034505_1_0_1"/>
<dbReference type="InParanoid" id="Q8LJJ9"/>
<dbReference type="OMA" id="KPVDQCW"/>
<dbReference type="OrthoDB" id="1924153at2759"/>
<dbReference type="UniPathway" id="UPA00199"/>
<dbReference type="Proteomes" id="UP000000763">
    <property type="component" value="Chromosome 1"/>
</dbReference>
<dbReference type="Proteomes" id="UP000059680">
    <property type="component" value="Chromosome 1"/>
</dbReference>
<dbReference type="GO" id="GO:0009507">
    <property type="term" value="C:chloroplast"/>
    <property type="evidence" value="ECO:0007669"/>
    <property type="project" value="UniProtKB-SubCell"/>
</dbReference>
<dbReference type="GO" id="GO:0046872">
    <property type="term" value="F:metal ion binding"/>
    <property type="evidence" value="ECO:0007669"/>
    <property type="project" value="UniProtKB-KW"/>
</dbReference>
<dbReference type="GO" id="GO:0045300">
    <property type="term" value="F:stearoyl-[ACP] desaturase activity"/>
    <property type="evidence" value="ECO:0000318"/>
    <property type="project" value="GO_Central"/>
</dbReference>
<dbReference type="GO" id="GO:0006633">
    <property type="term" value="P:fatty acid biosynthetic process"/>
    <property type="evidence" value="ECO:0007669"/>
    <property type="project" value="UniProtKB-KW"/>
</dbReference>
<dbReference type="GO" id="GO:0006631">
    <property type="term" value="P:fatty acid metabolic process"/>
    <property type="evidence" value="ECO:0000318"/>
    <property type="project" value="GO_Central"/>
</dbReference>
<dbReference type="CDD" id="cd01050">
    <property type="entry name" value="Acyl_ACP_Desat"/>
    <property type="match status" value="1"/>
</dbReference>
<dbReference type="FunFam" id="1.10.620.20:FF:000002">
    <property type="entry name" value="Stearoyl-[acyl-carrier-protein] 9-desaturase, chloroplastic"/>
    <property type="match status" value="1"/>
</dbReference>
<dbReference type="Gene3D" id="1.10.620.20">
    <property type="entry name" value="Ribonucleotide Reductase, subunit A"/>
    <property type="match status" value="1"/>
</dbReference>
<dbReference type="InterPro" id="IPR005067">
    <property type="entry name" value="Fatty_acid_desaturase-2"/>
</dbReference>
<dbReference type="InterPro" id="IPR009078">
    <property type="entry name" value="Ferritin-like_SF"/>
</dbReference>
<dbReference type="InterPro" id="IPR012348">
    <property type="entry name" value="RNR-like"/>
</dbReference>
<dbReference type="PANTHER" id="PTHR31155">
    <property type="entry name" value="ACYL- ACYL-CARRIER-PROTEIN DESATURASE-RELATED"/>
    <property type="match status" value="1"/>
</dbReference>
<dbReference type="PANTHER" id="PTHR31155:SF31">
    <property type="entry name" value="STEAROYL-[ACYL-CARRIER-PROTEIN] 9-DESATURASE 6, CHLOROPLASTIC"/>
    <property type="match status" value="1"/>
</dbReference>
<dbReference type="Pfam" id="PF03405">
    <property type="entry name" value="FA_desaturase_2"/>
    <property type="match status" value="1"/>
</dbReference>
<dbReference type="PIRSF" id="PIRSF000346">
    <property type="entry name" value="Dlt9_acylACP_des"/>
    <property type="match status" value="1"/>
</dbReference>
<dbReference type="SUPFAM" id="SSF47240">
    <property type="entry name" value="Ferritin-like"/>
    <property type="match status" value="1"/>
</dbReference>
<evidence type="ECO:0000250" key="1">
    <source>
        <dbReference type="UniProtKB" id="P22337"/>
    </source>
</evidence>
<evidence type="ECO:0000255" key="2"/>
<evidence type="ECO:0000305" key="3"/>
<accession>Q8LJJ9</accession>
<accession>A0A0P0VB45</accession>
<reference key="1">
    <citation type="journal article" date="2002" name="Nature">
        <title>The genome sequence and structure of rice chromosome 1.</title>
        <authorList>
            <person name="Sasaki T."/>
            <person name="Matsumoto T."/>
            <person name="Yamamoto K."/>
            <person name="Sakata K."/>
            <person name="Baba T."/>
            <person name="Katayose Y."/>
            <person name="Wu J."/>
            <person name="Niimura Y."/>
            <person name="Cheng Z."/>
            <person name="Nagamura Y."/>
            <person name="Antonio B.A."/>
            <person name="Kanamori H."/>
            <person name="Hosokawa S."/>
            <person name="Masukawa M."/>
            <person name="Arikawa K."/>
            <person name="Chiden Y."/>
            <person name="Hayashi M."/>
            <person name="Okamoto M."/>
            <person name="Ando T."/>
            <person name="Aoki H."/>
            <person name="Arita K."/>
            <person name="Hamada M."/>
            <person name="Harada C."/>
            <person name="Hijishita S."/>
            <person name="Honda M."/>
            <person name="Ichikawa Y."/>
            <person name="Idonuma A."/>
            <person name="Iijima M."/>
            <person name="Ikeda M."/>
            <person name="Ikeno M."/>
            <person name="Ito S."/>
            <person name="Ito T."/>
            <person name="Ito Y."/>
            <person name="Ito Y."/>
            <person name="Iwabuchi A."/>
            <person name="Kamiya K."/>
            <person name="Karasawa W."/>
            <person name="Katagiri S."/>
            <person name="Kikuta A."/>
            <person name="Kobayashi N."/>
            <person name="Kono I."/>
            <person name="Machita K."/>
            <person name="Maehara T."/>
            <person name="Mizuno H."/>
            <person name="Mizubayashi T."/>
            <person name="Mukai Y."/>
            <person name="Nagasaki H."/>
            <person name="Nakashima M."/>
            <person name="Nakama Y."/>
            <person name="Nakamichi Y."/>
            <person name="Nakamura M."/>
            <person name="Namiki N."/>
            <person name="Negishi M."/>
            <person name="Ohta I."/>
            <person name="Ono N."/>
            <person name="Saji S."/>
            <person name="Sakai K."/>
            <person name="Shibata M."/>
            <person name="Shimokawa T."/>
            <person name="Shomura A."/>
            <person name="Song J."/>
            <person name="Takazaki Y."/>
            <person name="Terasawa K."/>
            <person name="Tsuji K."/>
            <person name="Waki K."/>
            <person name="Yamagata H."/>
            <person name="Yamane H."/>
            <person name="Yoshiki S."/>
            <person name="Yoshihara R."/>
            <person name="Yukawa K."/>
            <person name="Zhong H."/>
            <person name="Iwama H."/>
            <person name="Endo T."/>
            <person name="Ito H."/>
            <person name="Hahn J.H."/>
            <person name="Kim H.-I."/>
            <person name="Eun M.-Y."/>
            <person name="Yano M."/>
            <person name="Jiang J."/>
            <person name="Gojobori T."/>
        </authorList>
    </citation>
    <scope>NUCLEOTIDE SEQUENCE [LARGE SCALE GENOMIC DNA]</scope>
    <source>
        <strain>cv. Nipponbare</strain>
    </source>
</reference>
<reference key="2">
    <citation type="journal article" date="2005" name="Nature">
        <title>The map-based sequence of the rice genome.</title>
        <authorList>
            <consortium name="International rice genome sequencing project (IRGSP)"/>
        </authorList>
    </citation>
    <scope>NUCLEOTIDE SEQUENCE [LARGE SCALE GENOMIC DNA]</scope>
    <source>
        <strain>cv. Nipponbare</strain>
    </source>
</reference>
<reference key="3">
    <citation type="journal article" date="2008" name="Nucleic Acids Res.">
        <title>The rice annotation project database (RAP-DB): 2008 update.</title>
        <authorList>
            <consortium name="The rice annotation project (RAP)"/>
        </authorList>
    </citation>
    <scope>GENOME REANNOTATION</scope>
    <source>
        <strain>cv. Nipponbare</strain>
    </source>
</reference>
<reference key="4">
    <citation type="journal article" date="2013" name="Rice">
        <title>Improvement of the Oryza sativa Nipponbare reference genome using next generation sequence and optical map data.</title>
        <authorList>
            <person name="Kawahara Y."/>
            <person name="de la Bastide M."/>
            <person name="Hamilton J.P."/>
            <person name="Kanamori H."/>
            <person name="McCombie W.R."/>
            <person name="Ouyang S."/>
            <person name="Schwartz D.C."/>
            <person name="Tanaka T."/>
            <person name="Wu J."/>
            <person name="Zhou S."/>
            <person name="Childs K.L."/>
            <person name="Davidson R.M."/>
            <person name="Lin H."/>
            <person name="Quesada-Ocampo L."/>
            <person name="Vaillancourt B."/>
            <person name="Sakai H."/>
            <person name="Lee S.S."/>
            <person name="Kim J."/>
            <person name="Numa H."/>
            <person name="Itoh T."/>
            <person name="Buell C.R."/>
            <person name="Matsumoto T."/>
        </authorList>
    </citation>
    <scope>GENOME REANNOTATION</scope>
    <source>
        <strain>cv. Nipponbare</strain>
    </source>
</reference>
<reference key="5">
    <citation type="journal article" date="2003" name="Science">
        <title>Collection, mapping, and annotation of over 28,000 cDNA clones from japonica rice.</title>
        <authorList>
            <consortium name="The rice full-length cDNA consortium"/>
        </authorList>
    </citation>
    <scope>NUCLEOTIDE SEQUENCE [LARGE SCALE MRNA]</scope>
    <source>
        <strain>cv. Nipponbare</strain>
    </source>
</reference>
<reference key="6">
    <citation type="journal article" date="2009" name="Mol. Plant Microbe Interact.">
        <title>Suppression of the rice fatty-acid desaturase gene OsSSI2 enhances resistance to blast and leaf blight diseases in rice.</title>
        <authorList>
            <person name="Jiang C.J."/>
            <person name="Shimono M."/>
            <person name="Maeda S."/>
            <person name="Inoue H."/>
            <person name="Mori M."/>
            <person name="Hasegawa M."/>
            <person name="Sugano S."/>
            <person name="Takatsuji H."/>
        </authorList>
    </citation>
    <scope>GENE FAMILY</scope>
</reference>
<gene>
    <name type="ordered locus">Os01g0880800</name>
    <name type="ordered locus">LOC_Os01g65830</name>
    <name type="ORF">P0018C10.55</name>
</gene>